<protein>
    <recommendedName>
        <fullName evidence="1">Uroporphyrinogen decarboxylase</fullName>
        <shortName evidence="1">UPD</shortName>
        <shortName evidence="1">URO-D</shortName>
        <ecNumber evidence="1">4.1.1.37</ecNumber>
    </recommendedName>
</protein>
<evidence type="ECO:0000255" key="1">
    <source>
        <dbReference type="HAMAP-Rule" id="MF_00218"/>
    </source>
</evidence>
<comment type="function">
    <text evidence="1">Catalyzes the decarboxylation of four acetate groups of uroporphyrinogen-III to yield coproporphyrinogen-III.</text>
</comment>
<comment type="catalytic activity">
    <reaction evidence="1">
        <text>uroporphyrinogen III + 4 H(+) = coproporphyrinogen III + 4 CO2</text>
        <dbReference type="Rhea" id="RHEA:19865"/>
        <dbReference type="ChEBI" id="CHEBI:15378"/>
        <dbReference type="ChEBI" id="CHEBI:16526"/>
        <dbReference type="ChEBI" id="CHEBI:57308"/>
        <dbReference type="ChEBI" id="CHEBI:57309"/>
        <dbReference type="EC" id="4.1.1.37"/>
    </reaction>
</comment>
<comment type="pathway">
    <text evidence="1">Porphyrin-containing compound metabolism; protoporphyrin-IX biosynthesis; coproporphyrinogen-III from 5-aminolevulinate: step 4/4.</text>
</comment>
<comment type="subunit">
    <text evidence="1">Homodimer.</text>
</comment>
<comment type="subcellular location">
    <subcellularLocation>
        <location evidence="1">Cytoplasm</location>
    </subcellularLocation>
</comment>
<comment type="similarity">
    <text evidence="1">Belongs to the uroporphyrinogen decarboxylase family.</text>
</comment>
<reference key="1">
    <citation type="journal article" date="2003" name="DNA Res.">
        <title>Complete genome structure of Gloeobacter violaceus PCC 7421, a cyanobacterium that lacks thylakoids.</title>
        <authorList>
            <person name="Nakamura Y."/>
            <person name="Kaneko T."/>
            <person name="Sato S."/>
            <person name="Mimuro M."/>
            <person name="Miyashita H."/>
            <person name="Tsuchiya T."/>
            <person name="Sasamoto S."/>
            <person name="Watanabe A."/>
            <person name="Kawashima K."/>
            <person name="Kishida Y."/>
            <person name="Kiyokawa C."/>
            <person name="Kohara M."/>
            <person name="Matsumoto M."/>
            <person name="Matsuno A."/>
            <person name="Nakazaki N."/>
            <person name="Shimpo S."/>
            <person name="Takeuchi C."/>
            <person name="Yamada M."/>
            <person name="Tabata S."/>
        </authorList>
    </citation>
    <scope>NUCLEOTIDE SEQUENCE [LARGE SCALE GENOMIC DNA]</scope>
    <source>
        <strain>ATCC 29082 / PCC 7421</strain>
    </source>
</reference>
<gene>
    <name evidence="1" type="primary">hemE</name>
    <name type="ordered locus">gll3877</name>
</gene>
<sequence length="347" mass="38530">MTQSLLLDAARSKPVARPPVWMMRQAGRYMAEYRALRDKYGFKERCENPDLAVEISLQPFRAFRPDGVIMFSDILTPFDGMGIPFELVESRGPVIDPPIRTREQVEAVRPLDPEASLAFVRTILQTLRREVGEAATVLGFVGAPWTLAAYAVEGKSSKDYALIKQMAFSEPDLLHALLTKFADAIARYVIFQIDSGAQAVQLFDTWAGQLNPADYRAFALPYERRIVEQVRQVHPETPLILYINHSAGLLRHVGESGVDVMSLDWTVDMAEARAILGPDMAVQGNLDPCVLLGDQAQIRSRILDIVEKAGPTGHIMNLGHGILPSTPEDNARFFFETVKSLAPVSAR</sequence>
<name>DCUP_GLOVI</name>
<dbReference type="EC" id="4.1.1.37" evidence="1"/>
<dbReference type="EMBL" id="BA000045">
    <property type="protein sequence ID" value="BAC91818.1"/>
    <property type="molecule type" value="Genomic_DNA"/>
</dbReference>
<dbReference type="RefSeq" id="NP_926823.1">
    <property type="nucleotide sequence ID" value="NC_005125.1"/>
</dbReference>
<dbReference type="RefSeq" id="WP_011143865.1">
    <property type="nucleotide sequence ID" value="NC_005125.1"/>
</dbReference>
<dbReference type="SMR" id="Q7NEK2"/>
<dbReference type="FunCoup" id="Q7NEK2">
    <property type="interactions" value="416"/>
</dbReference>
<dbReference type="STRING" id="251221.gene:10761394"/>
<dbReference type="EnsemblBacteria" id="BAC91818">
    <property type="protein sequence ID" value="BAC91818"/>
    <property type="gene ID" value="BAC91818"/>
</dbReference>
<dbReference type="KEGG" id="gvi:gll3877"/>
<dbReference type="PATRIC" id="fig|251221.4.peg.3912"/>
<dbReference type="eggNOG" id="COG0407">
    <property type="taxonomic scope" value="Bacteria"/>
</dbReference>
<dbReference type="HOGENOM" id="CLU_040933_0_2_3"/>
<dbReference type="InParanoid" id="Q7NEK2"/>
<dbReference type="OrthoDB" id="9806656at2"/>
<dbReference type="PhylomeDB" id="Q7NEK2"/>
<dbReference type="UniPathway" id="UPA00251">
    <property type="reaction ID" value="UER00321"/>
</dbReference>
<dbReference type="Proteomes" id="UP000000557">
    <property type="component" value="Chromosome"/>
</dbReference>
<dbReference type="GO" id="GO:0005737">
    <property type="term" value="C:cytoplasm"/>
    <property type="evidence" value="ECO:0007669"/>
    <property type="project" value="UniProtKB-SubCell"/>
</dbReference>
<dbReference type="GO" id="GO:0004853">
    <property type="term" value="F:uroporphyrinogen decarboxylase activity"/>
    <property type="evidence" value="ECO:0007669"/>
    <property type="project" value="UniProtKB-UniRule"/>
</dbReference>
<dbReference type="GO" id="GO:0006782">
    <property type="term" value="P:protoporphyrinogen IX biosynthetic process"/>
    <property type="evidence" value="ECO:0007669"/>
    <property type="project" value="UniProtKB-UniRule"/>
</dbReference>
<dbReference type="CDD" id="cd00717">
    <property type="entry name" value="URO-D"/>
    <property type="match status" value="1"/>
</dbReference>
<dbReference type="FunFam" id="3.20.20.210:FF:000006">
    <property type="entry name" value="Uroporphyrinogen decarboxylase"/>
    <property type="match status" value="1"/>
</dbReference>
<dbReference type="Gene3D" id="3.20.20.210">
    <property type="match status" value="1"/>
</dbReference>
<dbReference type="HAMAP" id="MF_00218">
    <property type="entry name" value="URO_D"/>
    <property type="match status" value="1"/>
</dbReference>
<dbReference type="InterPro" id="IPR038071">
    <property type="entry name" value="UROD/MetE-like_sf"/>
</dbReference>
<dbReference type="InterPro" id="IPR006361">
    <property type="entry name" value="Uroporphyrinogen_deCO2ase_HemE"/>
</dbReference>
<dbReference type="InterPro" id="IPR000257">
    <property type="entry name" value="Uroporphyrinogen_deCOase"/>
</dbReference>
<dbReference type="NCBIfam" id="TIGR01464">
    <property type="entry name" value="hemE"/>
    <property type="match status" value="1"/>
</dbReference>
<dbReference type="PANTHER" id="PTHR21091">
    <property type="entry name" value="METHYLTETRAHYDROFOLATE:HOMOCYSTEINE METHYLTRANSFERASE RELATED"/>
    <property type="match status" value="1"/>
</dbReference>
<dbReference type="PANTHER" id="PTHR21091:SF169">
    <property type="entry name" value="UROPORPHYRINOGEN DECARBOXYLASE"/>
    <property type="match status" value="1"/>
</dbReference>
<dbReference type="Pfam" id="PF01208">
    <property type="entry name" value="URO-D"/>
    <property type="match status" value="1"/>
</dbReference>
<dbReference type="SUPFAM" id="SSF51726">
    <property type="entry name" value="UROD/MetE-like"/>
    <property type="match status" value="1"/>
</dbReference>
<dbReference type="PROSITE" id="PS00906">
    <property type="entry name" value="UROD_1"/>
    <property type="match status" value="1"/>
</dbReference>
<dbReference type="PROSITE" id="PS00907">
    <property type="entry name" value="UROD_2"/>
    <property type="match status" value="1"/>
</dbReference>
<feature type="chain" id="PRO_0000187606" description="Uroporphyrinogen decarboxylase">
    <location>
        <begin position="1"/>
        <end position="347"/>
    </location>
</feature>
<feature type="binding site" evidence="1">
    <location>
        <begin position="24"/>
        <end position="28"/>
    </location>
    <ligand>
        <name>substrate</name>
    </ligand>
</feature>
<feature type="binding site" evidence="1">
    <location>
        <position position="42"/>
    </location>
    <ligand>
        <name>substrate</name>
    </ligand>
</feature>
<feature type="binding site" evidence="1">
    <location>
        <position position="73"/>
    </location>
    <ligand>
        <name>substrate</name>
    </ligand>
</feature>
<feature type="binding site" evidence="1">
    <location>
        <position position="150"/>
    </location>
    <ligand>
        <name>substrate</name>
    </ligand>
</feature>
<feature type="binding site" evidence="1">
    <location>
        <position position="205"/>
    </location>
    <ligand>
        <name>substrate</name>
    </ligand>
</feature>
<feature type="binding site" evidence="1">
    <location>
        <position position="320"/>
    </location>
    <ligand>
        <name>substrate</name>
    </ligand>
</feature>
<feature type="site" description="Transition state stabilizer" evidence="1">
    <location>
        <position position="73"/>
    </location>
</feature>
<organism>
    <name type="scientific">Gloeobacter violaceus (strain ATCC 29082 / PCC 7421)</name>
    <dbReference type="NCBI Taxonomy" id="251221"/>
    <lineage>
        <taxon>Bacteria</taxon>
        <taxon>Bacillati</taxon>
        <taxon>Cyanobacteriota</taxon>
        <taxon>Cyanophyceae</taxon>
        <taxon>Gloeobacterales</taxon>
        <taxon>Gloeobacteraceae</taxon>
        <taxon>Gloeobacter</taxon>
    </lineage>
</organism>
<keyword id="KW-0963">Cytoplasm</keyword>
<keyword id="KW-0210">Decarboxylase</keyword>
<keyword id="KW-0456">Lyase</keyword>
<keyword id="KW-0627">Porphyrin biosynthesis</keyword>
<keyword id="KW-1185">Reference proteome</keyword>
<proteinExistence type="inferred from homology"/>
<accession>Q7NEK2</accession>